<reference key="1">
    <citation type="journal article" date="2004" name="Nucleic Acids Res.">
        <title>Thermoadaptation trait revealed by the genome sequence of thermophilic Geobacillus kaustophilus.</title>
        <authorList>
            <person name="Takami H."/>
            <person name="Takaki Y."/>
            <person name="Chee G.-J."/>
            <person name="Nishi S."/>
            <person name="Shimamura S."/>
            <person name="Suzuki H."/>
            <person name="Matsui S."/>
            <person name="Uchiyama I."/>
        </authorList>
    </citation>
    <scope>NUCLEOTIDE SEQUENCE [LARGE SCALE GENOMIC DNA]</scope>
    <source>
        <strain>HTA426</strain>
    </source>
</reference>
<accession>Q5KVX6</accession>
<keyword id="KW-0460">Magnesium</keyword>
<keyword id="KW-0464">Manganese</keyword>
<keyword id="KW-0474">Menaquinone biosynthesis</keyword>
<keyword id="KW-0479">Metal-binding</keyword>
<keyword id="KW-1185">Reference proteome</keyword>
<keyword id="KW-0786">Thiamine pyrophosphate</keyword>
<keyword id="KW-0808">Transferase</keyword>
<gene>
    <name evidence="1" type="primary">menD</name>
    <name type="ordered locus">GK2875</name>
</gene>
<protein>
    <recommendedName>
        <fullName evidence="1">2-succinyl-5-enolpyruvyl-6-hydroxy-3-cyclohexene-1-carboxylate synthase</fullName>
        <shortName evidence="1">SEPHCHC synthase</shortName>
        <ecNumber evidence="1">2.2.1.9</ecNumber>
    </recommendedName>
    <alternativeName>
        <fullName evidence="1">Menaquinone biosynthesis protein MenD</fullName>
    </alternativeName>
</protein>
<evidence type="ECO:0000255" key="1">
    <source>
        <dbReference type="HAMAP-Rule" id="MF_01659"/>
    </source>
</evidence>
<feature type="chain" id="PRO_0000341749" description="2-succinyl-5-enolpyruvyl-6-hydroxy-3-cyclohexene-1-carboxylate synthase">
    <location>
        <begin position="1"/>
        <end position="577"/>
    </location>
</feature>
<name>MEND_GEOKA</name>
<comment type="function">
    <text evidence="1">Catalyzes the thiamine diphosphate-dependent decarboxylation of 2-oxoglutarate and the subsequent addition of the resulting succinic semialdehyde-thiamine pyrophosphate anion to isochorismate to yield 2-succinyl-5-enolpyruvyl-6-hydroxy-3-cyclohexene-1-carboxylate (SEPHCHC).</text>
</comment>
<comment type="catalytic activity">
    <reaction evidence="1">
        <text>isochorismate + 2-oxoglutarate + H(+) = 5-enolpyruvoyl-6-hydroxy-2-succinyl-cyclohex-3-ene-1-carboxylate + CO2</text>
        <dbReference type="Rhea" id="RHEA:25593"/>
        <dbReference type="ChEBI" id="CHEBI:15378"/>
        <dbReference type="ChEBI" id="CHEBI:16526"/>
        <dbReference type="ChEBI" id="CHEBI:16810"/>
        <dbReference type="ChEBI" id="CHEBI:29780"/>
        <dbReference type="ChEBI" id="CHEBI:58818"/>
        <dbReference type="EC" id="2.2.1.9"/>
    </reaction>
</comment>
<comment type="cofactor">
    <cofactor evidence="1">
        <name>Mg(2+)</name>
        <dbReference type="ChEBI" id="CHEBI:18420"/>
    </cofactor>
    <cofactor evidence="1">
        <name>Mn(2+)</name>
        <dbReference type="ChEBI" id="CHEBI:29035"/>
    </cofactor>
</comment>
<comment type="cofactor">
    <cofactor evidence="1">
        <name>thiamine diphosphate</name>
        <dbReference type="ChEBI" id="CHEBI:58937"/>
    </cofactor>
    <text evidence="1">Binds 1 thiamine pyrophosphate per subunit.</text>
</comment>
<comment type="pathway">
    <text evidence="1">Quinol/quinone metabolism; 1,4-dihydroxy-2-naphthoate biosynthesis; 1,4-dihydroxy-2-naphthoate from chorismate: step 2/7.</text>
</comment>
<comment type="pathway">
    <text evidence="1">Quinol/quinone metabolism; menaquinone biosynthesis.</text>
</comment>
<comment type="subunit">
    <text evidence="1">Homodimer.</text>
</comment>
<comment type="similarity">
    <text evidence="1">Belongs to the TPP enzyme family. MenD subfamily.</text>
</comment>
<organism>
    <name type="scientific">Geobacillus kaustophilus (strain HTA426)</name>
    <dbReference type="NCBI Taxonomy" id="235909"/>
    <lineage>
        <taxon>Bacteria</taxon>
        <taxon>Bacillati</taxon>
        <taxon>Bacillota</taxon>
        <taxon>Bacilli</taxon>
        <taxon>Bacillales</taxon>
        <taxon>Anoxybacillaceae</taxon>
        <taxon>Geobacillus</taxon>
        <taxon>Geobacillus thermoleovorans group</taxon>
    </lineage>
</organism>
<proteinExistence type="inferred from homology"/>
<sequence>MADALSVYAAALVDGLAQAGVTEAVISPGSRSTPLAMAMAAHPGLRLYMNIDERSAAFFALGLAKAKQRPVALVCTSGTAAANYGPAVVEAYYSRVPLVVLTADRPHELRDVGAPQAIDQLHLYGRYAKWFVDLALPEEADDMLRYARTMAARAVQTAAGAPCGPVHVNAPFREPLVPHIDEAVWERVRSVSRAPQVWRGRPALPQESVSALYEQLSAAERGLIVCGPLDRPGFAEAVTELARALDFPILADPLSQLRAGTHDKTYVLDSYDAILREETAASKLVPDVVLRFGAMPVSKPLFLWLKRHRAIRQIVVDDGGWRDPTLSADSFVQSDEWILCRQLLEWAKPKENKSAWSAIWREMNAIARAALERHLPKEEWFEGNVFTELADLLPAGAALFVGNSMPIRDADTFLFATDKPLRVLANRGANGIDGVVSSALGASVAANPLVLVIGDLSFYHDLNGLLAAKMHSLSATIVLLNNNGGGIFSFLPQARHKGAFETLFGTPTDLSFAHAVEMYGGRHTVPHNWAEFRRHVSESLSSGGLHVIEVRTSRAENVRMHRLLWNEVAREIAKCLE</sequence>
<dbReference type="EC" id="2.2.1.9" evidence="1"/>
<dbReference type="EMBL" id="BA000043">
    <property type="protein sequence ID" value="BAD77160.1"/>
    <property type="molecule type" value="Genomic_DNA"/>
</dbReference>
<dbReference type="RefSeq" id="WP_011232347.1">
    <property type="nucleotide sequence ID" value="NC_006510.1"/>
</dbReference>
<dbReference type="SMR" id="Q5KVX6"/>
<dbReference type="STRING" id="235909.GK2875"/>
<dbReference type="KEGG" id="gka:GK2875"/>
<dbReference type="PATRIC" id="fig|235909.7.peg.3069"/>
<dbReference type="eggNOG" id="COG1165">
    <property type="taxonomic scope" value="Bacteria"/>
</dbReference>
<dbReference type="HOGENOM" id="CLU_006051_3_0_9"/>
<dbReference type="UniPathway" id="UPA00079"/>
<dbReference type="UniPathway" id="UPA01057">
    <property type="reaction ID" value="UER00164"/>
</dbReference>
<dbReference type="Proteomes" id="UP000001172">
    <property type="component" value="Chromosome"/>
</dbReference>
<dbReference type="GO" id="GO:0070204">
    <property type="term" value="F:2-succinyl-5-enolpyruvyl-6-hydroxy-3-cyclohexene-1-carboxylic-acid synthase activity"/>
    <property type="evidence" value="ECO:0007669"/>
    <property type="project" value="UniProtKB-UniRule"/>
</dbReference>
<dbReference type="GO" id="GO:0000287">
    <property type="term" value="F:magnesium ion binding"/>
    <property type="evidence" value="ECO:0007669"/>
    <property type="project" value="UniProtKB-UniRule"/>
</dbReference>
<dbReference type="GO" id="GO:0030145">
    <property type="term" value="F:manganese ion binding"/>
    <property type="evidence" value="ECO:0007669"/>
    <property type="project" value="UniProtKB-UniRule"/>
</dbReference>
<dbReference type="GO" id="GO:0030976">
    <property type="term" value="F:thiamine pyrophosphate binding"/>
    <property type="evidence" value="ECO:0007669"/>
    <property type="project" value="UniProtKB-UniRule"/>
</dbReference>
<dbReference type="GO" id="GO:0009234">
    <property type="term" value="P:menaquinone biosynthetic process"/>
    <property type="evidence" value="ECO:0007669"/>
    <property type="project" value="UniProtKB-UniRule"/>
</dbReference>
<dbReference type="CDD" id="cd07037">
    <property type="entry name" value="TPP_PYR_MenD"/>
    <property type="match status" value="1"/>
</dbReference>
<dbReference type="CDD" id="cd02009">
    <property type="entry name" value="TPP_SHCHC_synthase"/>
    <property type="match status" value="1"/>
</dbReference>
<dbReference type="Gene3D" id="3.40.50.970">
    <property type="match status" value="2"/>
</dbReference>
<dbReference type="Gene3D" id="3.40.50.1220">
    <property type="entry name" value="TPP-binding domain"/>
    <property type="match status" value="1"/>
</dbReference>
<dbReference type="HAMAP" id="MF_01659">
    <property type="entry name" value="MenD"/>
    <property type="match status" value="1"/>
</dbReference>
<dbReference type="InterPro" id="IPR029035">
    <property type="entry name" value="DHS-like_NAD/FAD-binding_dom"/>
</dbReference>
<dbReference type="InterPro" id="IPR004433">
    <property type="entry name" value="MenaQ_synth_MenD"/>
</dbReference>
<dbReference type="InterPro" id="IPR032264">
    <property type="entry name" value="MenD_middle"/>
</dbReference>
<dbReference type="InterPro" id="IPR029061">
    <property type="entry name" value="THDP-binding"/>
</dbReference>
<dbReference type="InterPro" id="IPR012001">
    <property type="entry name" value="Thiamin_PyroP_enz_TPP-bd_dom"/>
</dbReference>
<dbReference type="InterPro" id="IPR011766">
    <property type="entry name" value="TPP_enzyme_TPP-bd"/>
</dbReference>
<dbReference type="NCBIfam" id="TIGR00173">
    <property type="entry name" value="menD"/>
    <property type="match status" value="1"/>
</dbReference>
<dbReference type="PANTHER" id="PTHR42916">
    <property type="entry name" value="2-SUCCINYL-5-ENOLPYRUVYL-6-HYDROXY-3-CYCLOHEXENE-1-CARBOXYLATE SYNTHASE"/>
    <property type="match status" value="1"/>
</dbReference>
<dbReference type="PANTHER" id="PTHR42916:SF1">
    <property type="entry name" value="PROTEIN PHYLLO, CHLOROPLASTIC"/>
    <property type="match status" value="1"/>
</dbReference>
<dbReference type="Pfam" id="PF02775">
    <property type="entry name" value="TPP_enzyme_C"/>
    <property type="match status" value="1"/>
</dbReference>
<dbReference type="Pfam" id="PF16582">
    <property type="entry name" value="TPP_enzyme_M_2"/>
    <property type="match status" value="1"/>
</dbReference>
<dbReference type="Pfam" id="PF02776">
    <property type="entry name" value="TPP_enzyme_N"/>
    <property type="match status" value="1"/>
</dbReference>
<dbReference type="PIRSF" id="PIRSF004983">
    <property type="entry name" value="MenD"/>
    <property type="match status" value="1"/>
</dbReference>
<dbReference type="SUPFAM" id="SSF52467">
    <property type="entry name" value="DHS-like NAD/FAD-binding domain"/>
    <property type="match status" value="1"/>
</dbReference>
<dbReference type="SUPFAM" id="SSF52518">
    <property type="entry name" value="Thiamin diphosphate-binding fold (THDP-binding)"/>
    <property type="match status" value="2"/>
</dbReference>